<sequence>MSIDSLRDSIDRLWENREGLSSATTGEARDAVEEALRLLDSGQVRVAEPKAEGGWSVNQWLKKAVLLSFRLTDSTPAPGFGPVASYDKVPLKFEGWDQARFAQGGFRVVPGAVVRRSAYIAPGVVLMPSFVNVGAYVDSGTMIDTWATVGSCAQVGKNCHISGGTGIGGVLEPLQAGPVVIEDNVFIGARSEVAEGVVVEQGSVISMGVFIGASTKIIDRATGEVLYGRVPAYSVVVPGSLPGKPLPDGTPGPSLACAVIVKRVDERTRSKTSINELLRA</sequence>
<reference key="1">
    <citation type="journal article" date="2007" name="J. Bacteriol.">
        <title>Genome sequence analysis of the emerging human pathogenic acetic acid bacterium Granulibacter bethesdensis.</title>
        <authorList>
            <person name="Greenberg D.E."/>
            <person name="Porcella S.F."/>
            <person name="Zelazny A.M."/>
            <person name="Virtaneva K."/>
            <person name="Sturdevant D.E."/>
            <person name="Kupko J.J. III"/>
            <person name="Barbian K.D."/>
            <person name="Babar A."/>
            <person name="Dorward D.W."/>
            <person name="Holland S.M."/>
        </authorList>
    </citation>
    <scope>NUCLEOTIDE SEQUENCE [LARGE SCALE GENOMIC DNA]</scope>
    <source>
        <strain>ATCC BAA-1260 / CGDNIH1</strain>
    </source>
</reference>
<gene>
    <name evidence="1" type="primary">dapD</name>
    <name type="ordered locus">GbCGDNIH1_0686</name>
</gene>
<accession>Q0BUB8</accession>
<comment type="catalytic activity">
    <reaction evidence="1">
        <text>(S)-2,3,4,5-tetrahydrodipicolinate + succinyl-CoA + H2O = (S)-2-succinylamino-6-oxoheptanedioate + CoA</text>
        <dbReference type="Rhea" id="RHEA:17325"/>
        <dbReference type="ChEBI" id="CHEBI:15377"/>
        <dbReference type="ChEBI" id="CHEBI:15685"/>
        <dbReference type="ChEBI" id="CHEBI:16845"/>
        <dbReference type="ChEBI" id="CHEBI:57287"/>
        <dbReference type="ChEBI" id="CHEBI:57292"/>
        <dbReference type="EC" id="2.3.1.117"/>
    </reaction>
</comment>
<comment type="pathway">
    <text evidence="1">Amino-acid biosynthesis; L-lysine biosynthesis via DAP pathway; LL-2,6-diaminopimelate from (S)-tetrahydrodipicolinate (succinylase route): step 1/3.</text>
</comment>
<comment type="subunit">
    <text evidence="1">Homotrimer.</text>
</comment>
<comment type="subcellular location">
    <subcellularLocation>
        <location evidence="1">Cytoplasm</location>
    </subcellularLocation>
</comment>
<comment type="similarity">
    <text evidence="1">Belongs to the transferase hexapeptide repeat family.</text>
</comment>
<evidence type="ECO:0000255" key="1">
    <source>
        <dbReference type="HAMAP-Rule" id="MF_00811"/>
    </source>
</evidence>
<dbReference type="EC" id="2.3.1.117" evidence="1"/>
<dbReference type="EMBL" id="CP000394">
    <property type="protein sequence ID" value="ABI61584.1"/>
    <property type="molecule type" value="Genomic_DNA"/>
</dbReference>
<dbReference type="RefSeq" id="WP_011631393.1">
    <property type="nucleotide sequence ID" value="NC_008343.2"/>
</dbReference>
<dbReference type="SMR" id="Q0BUB8"/>
<dbReference type="STRING" id="391165.GbCGDNIH1_0686"/>
<dbReference type="KEGG" id="gbe:GbCGDNIH1_0686"/>
<dbReference type="eggNOG" id="COG2171">
    <property type="taxonomic scope" value="Bacteria"/>
</dbReference>
<dbReference type="HOGENOM" id="CLU_050859_0_1_5"/>
<dbReference type="OrthoDB" id="9775362at2"/>
<dbReference type="UniPathway" id="UPA00034">
    <property type="reaction ID" value="UER00019"/>
</dbReference>
<dbReference type="Proteomes" id="UP000001963">
    <property type="component" value="Chromosome"/>
</dbReference>
<dbReference type="GO" id="GO:0005737">
    <property type="term" value="C:cytoplasm"/>
    <property type="evidence" value="ECO:0007669"/>
    <property type="project" value="UniProtKB-SubCell"/>
</dbReference>
<dbReference type="GO" id="GO:0008666">
    <property type="term" value="F:2,3,4,5-tetrahydropyridine-2,6-dicarboxylate N-succinyltransferase activity"/>
    <property type="evidence" value="ECO:0007669"/>
    <property type="project" value="UniProtKB-UniRule"/>
</dbReference>
<dbReference type="GO" id="GO:0016779">
    <property type="term" value="F:nucleotidyltransferase activity"/>
    <property type="evidence" value="ECO:0007669"/>
    <property type="project" value="TreeGrafter"/>
</dbReference>
<dbReference type="GO" id="GO:0019877">
    <property type="term" value="P:diaminopimelate biosynthetic process"/>
    <property type="evidence" value="ECO:0007669"/>
    <property type="project" value="UniProtKB-UniRule"/>
</dbReference>
<dbReference type="GO" id="GO:0009089">
    <property type="term" value="P:lysine biosynthetic process via diaminopimelate"/>
    <property type="evidence" value="ECO:0007669"/>
    <property type="project" value="UniProtKB-UniRule"/>
</dbReference>
<dbReference type="CDD" id="cd03350">
    <property type="entry name" value="LbH_THP_succinylT"/>
    <property type="match status" value="1"/>
</dbReference>
<dbReference type="Gene3D" id="2.160.10.10">
    <property type="entry name" value="Hexapeptide repeat proteins"/>
    <property type="match status" value="1"/>
</dbReference>
<dbReference type="Gene3D" id="1.10.166.10">
    <property type="entry name" value="Tetrahydrodipicolinate-N-succinyltransferase, N-terminal domain"/>
    <property type="match status" value="1"/>
</dbReference>
<dbReference type="HAMAP" id="MF_00811">
    <property type="entry name" value="DapD"/>
    <property type="match status" value="1"/>
</dbReference>
<dbReference type="InterPro" id="IPR005664">
    <property type="entry name" value="DapD_Trfase_Hexpep_rpt_fam"/>
</dbReference>
<dbReference type="InterPro" id="IPR001451">
    <property type="entry name" value="Hexapep"/>
</dbReference>
<dbReference type="InterPro" id="IPR023180">
    <property type="entry name" value="THP_succinylTrfase_dom1"/>
</dbReference>
<dbReference type="InterPro" id="IPR037133">
    <property type="entry name" value="THP_succinylTrfase_N_sf"/>
</dbReference>
<dbReference type="InterPro" id="IPR011004">
    <property type="entry name" value="Trimer_LpxA-like_sf"/>
</dbReference>
<dbReference type="NCBIfam" id="TIGR00965">
    <property type="entry name" value="dapD"/>
    <property type="match status" value="1"/>
</dbReference>
<dbReference type="NCBIfam" id="NF008808">
    <property type="entry name" value="PRK11830.1"/>
    <property type="match status" value="1"/>
</dbReference>
<dbReference type="PANTHER" id="PTHR19136:SF52">
    <property type="entry name" value="2,3,4,5-TETRAHYDROPYRIDINE-2,6-DICARBOXYLATE N-SUCCINYLTRANSFERASE"/>
    <property type="match status" value="1"/>
</dbReference>
<dbReference type="PANTHER" id="PTHR19136">
    <property type="entry name" value="MOLYBDENUM COFACTOR GUANYLYLTRANSFERASE"/>
    <property type="match status" value="1"/>
</dbReference>
<dbReference type="Pfam" id="PF14602">
    <property type="entry name" value="Hexapep_2"/>
    <property type="match status" value="1"/>
</dbReference>
<dbReference type="Pfam" id="PF14805">
    <property type="entry name" value="THDPS_N_2"/>
    <property type="match status" value="1"/>
</dbReference>
<dbReference type="SUPFAM" id="SSF51161">
    <property type="entry name" value="Trimeric LpxA-like enzymes"/>
    <property type="match status" value="1"/>
</dbReference>
<organism>
    <name type="scientific">Granulibacter bethesdensis (strain ATCC BAA-1260 / CGDNIH1)</name>
    <dbReference type="NCBI Taxonomy" id="391165"/>
    <lineage>
        <taxon>Bacteria</taxon>
        <taxon>Pseudomonadati</taxon>
        <taxon>Pseudomonadota</taxon>
        <taxon>Alphaproteobacteria</taxon>
        <taxon>Acetobacterales</taxon>
        <taxon>Acetobacteraceae</taxon>
        <taxon>Granulibacter</taxon>
    </lineage>
</organism>
<name>DAPD_GRABC</name>
<protein>
    <recommendedName>
        <fullName evidence="1">2,3,4,5-tetrahydropyridine-2,6-dicarboxylate N-succinyltransferase</fullName>
        <ecNumber evidence="1">2.3.1.117</ecNumber>
    </recommendedName>
    <alternativeName>
        <fullName evidence="1">Tetrahydrodipicolinate N-succinyltransferase</fullName>
        <shortName evidence="1">THDP succinyltransferase</shortName>
        <shortName evidence="1">THP succinyltransferase</shortName>
        <shortName evidence="1">Tetrahydropicolinate succinylase</shortName>
    </alternativeName>
</protein>
<keyword id="KW-0012">Acyltransferase</keyword>
<keyword id="KW-0028">Amino-acid biosynthesis</keyword>
<keyword id="KW-0963">Cytoplasm</keyword>
<keyword id="KW-0220">Diaminopimelate biosynthesis</keyword>
<keyword id="KW-0457">Lysine biosynthesis</keyword>
<keyword id="KW-1185">Reference proteome</keyword>
<keyword id="KW-0677">Repeat</keyword>
<keyword id="KW-0808">Transferase</keyword>
<proteinExistence type="inferred from homology"/>
<feature type="chain" id="PRO_1000047141" description="2,3,4,5-tetrahydropyridine-2,6-dicarboxylate N-succinyltransferase">
    <location>
        <begin position="1"/>
        <end position="280"/>
    </location>
</feature>
<feature type="binding site" evidence="1">
    <location>
        <position position="107"/>
    </location>
    <ligand>
        <name>substrate</name>
    </ligand>
</feature>
<feature type="binding site" evidence="1">
    <location>
        <position position="144"/>
    </location>
    <ligand>
        <name>substrate</name>
    </ligand>
</feature>